<keyword id="KW-0067">ATP-binding</keyword>
<keyword id="KW-0963">Cytoplasm</keyword>
<keyword id="KW-0227">DNA damage</keyword>
<keyword id="KW-0233">DNA recombination</keyword>
<keyword id="KW-0234">DNA repair</keyword>
<keyword id="KW-0238">DNA-binding</keyword>
<keyword id="KW-0547">Nucleotide-binding</keyword>
<keyword id="KW-0742">SOS response</keyword>
<feature type="chain" id="PRO_0000122723" description="Protein RecA">
    <location>
        <begin position="1"/>
        <end position="354"/>
    </location>
</feature>
<feature type="binding site" evidence="1">
    <location>
        <begin position="67"/>
        <end position="74"/>
    </location>
    <ligand>
        <name>ATP</name>
        <dbReference type="ChEBI" id="CHEBI:30616"/>
    </ligand>
</feature>
<sequence>MATQEEKQKALAAALGQIEKQFGKGSIMKLGDTKTLDVESISTGSLGLDVALGIGGLPMGRIVEIFGPESSGKTTLTLSVIAQAQKAGKTCAFIDAEHALDPIYAAKLGVDVKELFVSQPDNGEQALEICDALVRSGAIDVIIVDSVAALTPKAEIEGDMGDSHMGLQARLMSQALRKLTGQIKNANCLVVFINQIRMKIGVMFGNPETTTGGNALKFYSSVRLDIRRTGSVKDGENIIGNETRVKVVKNKLAAPFRQVDFQILYGEGISKAGELLELGVKHKLVEKSGAWYSYNGEKIGQGKANSMKWLNENIEKSDELEARLRAELVANPEQALMADIEQSENNTESESDFE</sequence>
<reference key="1">
    <citation type="journal article" date="2005" name="J. Bacteriol.">
        <title>Genomic sequence of an otitis media isolate of nontypeable Haemophilus influenzae: comparative study with H. influenzae serotype d, strain KW20.</title>
        <authorList>
            <person name="Harrison A."/>
            <person name="Dyer D.W."/>
            <person name="Gillaspy A."/>
            <person name="Ray W.C."/>
            <person name="Mungur R."/>
            <person name="Carson M.B."/>
            <person name="Zhong H."/>
            <person name="Gipson J."/>
            <person name="Gipson M."/>
            <person name="Johnson L.S."/>
            <person name="Lewis L."/>
            <person name="Bakaletz L.O."/>
            <person name="Munson R.S. Jr."/>
        </authorList>
    </citation>
    <scope>NUCLEOTIDE SEQUENCE [LARGE SCALE GENOMIC DNA]</scope>
    <source>
        <strain>86-028NP</strain>
    </source>
</reference>
<name>RECA_HAEI8</name>
<evidence type="ECO:0000255" key="1">
    <source>
        <dbReference type="HAMAP-Rule" id="MF_00268"/>
    </source>
</evidence>
<accession>Q4QMV2</accession>
<protein>
    <recommendedName>
        <fullName evidence="1">Protein RecA</fullName>
    </recommendedName>
    <alternativeName>
        <fullName evidence="1">Recombinase A</fullName>
    </alternativeName>
</protein>
<gene>
    <name evidence="1" type="primary">recA</name>
    <name type="ordered locus">NTHI0729</name>
</gene>
<comment type="function">
    <text evidence="1">Can catalyze the hydrolysis of ATP in the presence of single-stranded DNA, the ATP-dependent uptake of single-stranded DNA by duplex DNA, and the ATP-dependent hybridization of homologous single-stranded DNAs. It interacts with LexA causing its activation and leading to its autocatalytic cleavage.</text>
</comment>
<comment type="subcellular location">
    <subcellularLocation>
        <location evidence="1">Cytoplasm</location>
    </subcellularLocation>
</comment>
<comment type="similarity">
    <text evidence="1">Belongs to the RecA family.</text>
</comment>
<dbReference type="EMBL" id="CP000057">
    <property type="protein sequence ID" value="AAX87645.1"/>
    <property type="molecule type" value="Genomic_DNA"/>
</dbReference>
<dbReference type="RefSeq" id="WP_005654959.1">
    <property type="nucleotide sequence ID" value="NC_007146.2"/>
</dbReference>
<dbReference type="SMR" id="Q4QMV2"/>
<dbReference type="GeneID" id="93219608"/>
<dbReference type="KEGG" id="hit:NTHI0729"/>
<dbReference type="HOGENOM" id="CLU_040469_3_2_6"/>
<dbReference type="Proteomes" id="UP000002525">
    <property type="component" value="Chromosome"/>
</dbReference>
<dbReference type="GO" id="GO:0005829">
    <property type="term" value="C:cytosol"/>
    <property type="evidence" value="ECO:0007669"/>
    <property type="project" value="TreeGrafter"/>
</dbReference>
<dbReference type="GO" id="GO:0005524">
    <property type="term" value="F:ATP binding"/>
    <property type="evidence" value="ECO:0007669"/>
    <property type="project" value="UniProtKB-UniRule"/>
</dbReference>
<dbReference type="GO" id="GO:0016887">
    <property type="term" value="F:ATP hydrolysis activity"/>
    <property type="evidence" value="ECO:0007669"/>
    <property type="project" value="InterPro"/>
</dbReference>
<dbReference type="GO" id="GO:0140664">
    <property type="term" value="F:ATP-dependent DNA damage sensor activity"/>
    <property type="evidence" value="ECO:0007669"/>
    <property type="project" value="InterPro"/>
</dbReference>
<dbReference type="GO" id="GO:0003684">
    <property type="term" value="F:damaged DNA binding"/>
    <property type="evidence" value="ECO:0007669"/>
    <property type="project" value="UniProtKB-UniRule"/>
</dbReference>
<dbReference type="GO" id="GO:0003697">
    <property type="term" value="F:single-stranded DNA binding"/>
    <property type="evidence" value="ECO:0007669"/>
    <property type="project" value="UniProtKB-UniRule"/>
</dbReference>
<dbReference type="GO" id="GO:0006310">
    <property type="term" value="P:DNA recombination"/>
    <property type="evidence" value="ECO:0007669"/>
    <property type="project" value="UniProtKB-UniRule"/>
</dbReference>
<dbReference type="GO" id="GO:0006281">
    <property type="term" value="P:DNA repair"/>
    <property type="evidence" value="ECO:0007669"/>
    <property type="project" value="UniProtKB-UniRule"/>
</dbReference>
<dbReference type="GO" id="GO:0009432">
    <property type="term" value="P:SOS response"/>
    <property type="evidence" value="ECO:0007669"/>
    <property type="project" value="UniProtKB-UniRule"/>
</dbReference>
<dbReference type="CDD" id="cd00983">
    <property type="entry name" value="RecA"/>
    <property type="match status" value="1"/>
</dbReference>
<dbReference type="FunFam" id="3.40.50.300:FF:000087">
    <property type="entry name" value="Recombinase RecA"/>
    <property type="match status" value="1"/>
</dbReference>
<dbReference type="Gene3D" id="3.40.50.300">
    <property type="entry name" value="P-loop containing nucleotide triphosphate hydrolases"/>
    <property type="match status" value="1"/>
</dbReference>
<dbReference type="HAMAP" id="MF_00268">
    <property type="entry name" value="RecA"/>
    <property type="match status" value="1"/>
</dbReference>
<dbReference type="InterPro" id="IPR003593">
    <property type="entry name" value="AAA+_ATPase"/>
</dbReference>
<dbReference type="InterPro" id="IPR013765">
    <property type="entry name" value="DNA_recomb/repair_RecA"/>
</dbReference>
<dbReference type="InterPro" id="IPR020584">
    <property type="entry name" value="DNA_recomb/repair_RecA_CS"/>
</dbReference>
<dbReference type="InterPro" id="IPR027417">
    <property type="entry name" value="P-loop_NTPase"/>
</dbReference>
<dbReference type="InterPro" id="IPR049261">
    <property type="entry name" value="RecA-like_C"/>
</dbReference>
<dbReference type="InterPro" id="IPR049428">
    <property type="entry name" value="RecA-like_N"/>
</dbReference>
<dbReference type="InterPro" id="IPR020588">
    <property type="entry name" value="RecA_ATP-bd"/>
</dbReference>
<dbReference type="InterPro" id="IPR023400">
    <property type="entry name" value="RecA_C_sf"/>
</dbReference>
<dbReference type="InterPro" id="IPR020587">
    <property type="entry name" value="RecA_monomer-monomer_interface"/>
</dbReference>
<dbReference type="NCBIfam" id="TIGR02012">
    <property type="entry name" value="tigrfam_recA"/>
    <property type="match status" value="1"/>
</dbReference>
<dbReference type="PANTHER" id="PTHR45900:SF1">
    <property type="entry name" value="MITOCHONDRIAL DNA REPAIR PROTEIN RECA HOMOLOG-RELATED"/>
    <property type="match status" value="1"/>
</dbReference>
<dbReference type="PANTHER" id="PTHR45900">
    <property type="entry name" value="RECA"/>
    <property type="match status" value="1"/>
</dbReference>
<dbReference type="Pfam" id="PF00154">
    <property type="entry name" value="RecA"/>
    <property type="match status" value="1"/>
</dbReference>
<dbReference type="Pfam" id="PF21096">
    <property type="entry name" value="RecA_C"/>
    <property type="match status" value="1"/>
</dbReference>
<dbReference type="PRINTS" id="PR00142">
    <property type="entry name" value="RECA"/>
</dbReference>
<dbReference type="SMART" id="SM00382">
    <property type="entry name" value="AAA"/>
    <property type="match status" value="1"/>
</dbReference>
<dbReference type="SUPFAM" id="SSF52540">
    <property type="entry name" value="P-loop containing nucleoside triphosphate hydrolases"/>
    <property type="match status" value="1"/>
</dbReference>
<dbReference type="SUPFAM" id="SSF54752">
    <property type="entry name" value="RecA protein, C-terminal domain"/>
    <property type="match status" value="1"/>
</dbReference>
<dbReference type="PROSITE" id="PS00321">
    <property type="entry name" value="RECA_1"/>
    <property type="match status" value="1"/>
</dbReference>
<dbReference type="PROSITE" id="PS50162">
    <property type="entry name" value="RECA_2"/>
    <property type="match status" value="1"/>
</dbReference>
<dbReference type="PROSITE" id="PS50163">
    <property type="entry name" value="RECA_3"/>
    <property type="match status" value="1"/>
</dbReference>
<organism>
    <name type="scientific">Haemophilus influenzae (strain 86-028NP)</name>
    <dbReference type="NCBI Taxonomy" id="281310"/>
    <lineage>
        <taxon>Bacteria</taxon>
        <taxon>Pseudomonadati</taxon>
        <taxon>Pseudomonadota</taxon>
        <taxon>Gammaproteobacteria</taxon>
        <taxon>Pasteurellales</taxon>
        <taxon>Pasteurellaceae</taxon>
        <taxon>Haemophilus</taxon>
    </lineage>
</organism>
<proteinExistence type="inferred from homology"/>